<gene>
    <name evidence="1" type="primary">ispE</name>
    <name type="ordered locus">Rru_A0263</name>
</gene>
<accession>Q2RXS7</accession>
<organism>
    <name type="scientific">Rhodospirillum rubrum (strain ATCC 11170 / ATH 1.1.1 / DSM 467 / LMG 4362 / NCIMB 8255 / S1)</name>
    <dbReference type="NCBI Taxonomy" id="269796"/>
    <lineage>
        <taxon>Bacteria</taxon>
        <taxon>Pseudomonadati</taxon>
        <taxon>Pseudomonadota</taxon>
        <taxon>Alphaproteobacteria</taxon>
        <taxon>Rhodospirillales</taxon>
        <taxon>Rhodospirillaceae</taxon>
        <taxon>Rhodospirillum</taxon>
    </lineage>
</organism>
<name>ISPE_RHORT</name>
<protein>
    <recommendedName>
        <fullName evidence="1">4-diphosphocytidyl-2-C-methyl-D-erythritol kinase</fullName>
        <shortName evidence="1">CMK</shortName>
        <ecNumber evidence="1">2.7.1.148</ecNumber>
    </recommendedName>
    <alternativeName>
        <fullName evidence="1">4-(cytidine-5'-diphospho)-2-C-methyl-D-erythritol kinase</fullName>
    </alternativeName>
</protein>
<proteinExistence type="inferred from homology"/>
<sequence length="304" mass="31620">MTAVFPAADSVIEAACAKVNLTLHVTGRRANGYHDLDSLVVFSGAHDTLIACPAEGLSLAMTGPTAALLDAEDDNIILRAARRLAERAGHRPDARLTLIKRLPVAAGIGGGSADGAATLRALSRLWKIALPQAEMLTLAAELGADVPVCLVGKAVTMAGIGDHLTPAPPLPEAWLLLVNPRRAVPTPQVFKARQGGFSAANPLTESPASAQALAEALKRRTNDLAEPARRIEPVIDEVLRTLAALPGCLLARMSGSGATCFGLFADQTSADFGMASLRETHGSWWASADRLIGDTARVPAALAV</sequence>
<reference key="1">
    <citation type="journal article" date="2011" name="Stand. Genomic Sci.">
        <title>Complete genome sequence of Rhodospirillum rubrum type strain (S1).</title>
        <authorList>
            <person name="Munk A.C."/>
            <person name="Copeland A."/>
            <person name="Lucas S."/>
            <person name="Lapidus A."/>
            <person name="Del Rio T.G."/>
            <person name="Barry K."/>
            <person name="Detter J.C."/>
            <person name="Hammon N."/>
            <person name="Israni S."/>
            <person name="Pitluck S."/>
            <person name="Brettin T."/>
            <person name="Bruce D."/>
            <person name="Han C."/>
            <person name="Tapia R."/>
            <person name="Gilna P."/>
            <person name="Schmutz J."/>
            <person name="Larimer F."/>
            <person name="Land M."/>
            <person name="Kyrpides N.C."/>
            <person name="Mavromatis K."/>
            <person name="Richardson P."/>
            <person name="Rohde M."/>
            <person name="Goeker M."/>
            <person name="Klenk H.P."/>
            <person name="Zhang Y."/>
            <person name="Roberts G.P."/>
            <person name="Reslewic S."/>
            <person name="Schwartz D.C."/>
        </authorList>
    </citation>
    <scope>NUCLEOTIDE SEQUENCE [LARGE SCALE GENOMIC DNA]</scope>
    <source>
        <strain>ATCC 11170 / ATH 1.1.1 / DSM 467 / LMG 4362 / NCIMB 8255 / S1</strain>
    </source>
</reference>
<comment type="function">
    <text evidence="1">Catalyzes the phosphorylation of the position 2 hydroxy group of 4-diphosphocytidyl-2C-methyl-D-erythritol.</text>
</comment>
<comment type="catalytic activity">
    <reaction evidence="1">
        <text>4-CDP-2-C-methyl-D-erythritol + ATP = 4-CDP-2-C-methyl-D-erythritol 2-phosphate + ADP + H(+)</text>
        <dbReference type="Rhea" id="RHEA:18437"/>
        <dbReference type="ChEBI" id="CHEBI:15378"/>
        <dbReference type="ChEBI" id="CHEBI:30616"/>
        <dbReference type="ChEBI" id="CHEBI:57823"/>
        <dbReference type="ChEBI" id="CHEBI:57919"/>
        <dbReference type="ChEBI" id="CHEBI:456216"/>
        <dbReference type="EC" id="2.7.1.148"/>
    </reaction>
</comment>
<comment type="pathway">
    <text evidence="1">Isoprenoid biosynthesis; isopentenyl diphosphate biosynthesis via DXP pathway; isopentenyl diphosphate from 1-deoxy-D-xylulose 5-phosphate: step 3/6.</text>
</comment>
<comment type="similarity">
    <text evidence="1">Belongs to the GHMP kinase family. IspE subfamily.</text>
</comment>
<keyword id="KW-0067">ATP-binding</keyword>
<keyword id="KW-0414">Isoprene biosynthesis</keyword>
<keyword id="KW-0418">Kinase</keyword>
<keyword id="KW-0547">Nucleotide-binding</keyword>
<keyword id="KW-1185">Reference proteome</keyword>
<keyword id="KW-0808">Transferase</keyword>
<evidence type="ECO:0000255" key="1">
    <source>
        <dbReference type="HAMAP-Rule" id="MF_00061"/>
    </source>
</evidence>
<feature type="chain" id="PRO_0000235125" description="4-diphosphocytidyl-2-C-methyl-D-erythritol kinase">
    <location>
        <begin position="1"/>
        <end position="304"/>
    </location>
</feature>
<feature type="active site" evidence="1">
    <location>
        <position position="18"/>
    </location>
</feature>
<feature type="active site" evidence="1">
    <location>
        <position position="145"/>
    </location>
</feature>
<feature type="binding site" evidence="1">
    <location>
        <begin position="103"/>
        <end position="113"/>
    </location>
    <ligand>
        <name>ATP</name>
        <dbReference type="ChEBI" id="CHEBI:30616"/>
    </ligand>
</feature>
<dbReference type="EC" id="2.7.1.148" evidence="1"/>
<dbReference type="EMBL" id="CP000230">
    <property type="protein sequence ID" value="ABC21068.1"/>
    <property type="molecule type" value="Genomic_DNA"/>
</dbReference>
<dbReference type="RefSeq" id="WP_011388016.1">
    <property type="nucleotide sequence ID" value="NC_007643.1"/>
</dbReference>
<dbReference type="RefSeq" id="YP_425355.1">
    <property type="nucleotide sequence ID" value="NC_007643.1"/>
</dbReference>
<dbReference type="SMR" id="Q2RXS7"/>
<dbReference type="STRING" id="269796.Rru_A0263"/>
<dbReference type="EnsemblBacteria" id="ABC21068">
    <property type="protein sequence ID" value="ABC21068"/>
    <property type="gene ID" value="Rru_A0263"/>
</dbReference>
<dbReference type="KEGG" id="rru:Rru_A0263"/>
<dbReference type="PATRIC" id="fig|269796.9.peg.317"/>
<dbReference type="eggNOG" id="COG1947">
    <property type="taxonomic scope" value="Bacteria"/>
</dbReference>
<dbReference type="HOGENOM" id="CLU_053057_1_0_5"/>
<dbReference type="PhylomeDB" id="Q2RXS7"/>
<dbReference type="UniPathway" id="UPA00056">
    <property type="reaction ID" value="UER00094"/>
</dbReference>
<dbReference type="Proteomes" id="UP000001929">
    <property type="component" value="Chromosome"/>
</dbReference>
<dbReference type="GO" id="GO:0050515">
    <property type="term" value="F:4-(cytidine 5'-diphospho)-2-C-methyl-D-erythritol kinase activity"/>
    <property type="evidence" value="ECO:0007669"/>
    <property type="project" value="UniProtKB-UniRule"/>
</dbReference>
<dbReference type="GO" id="GO:0005524">
    <property type="term" value="F:ATP binding"/>
    <property type="evidence" value="ECO:0007669"/>
    <property type="project" value="UniProtKB-UniRule"/>
</dbReference>
<dbReference type="GO" id="GO:0019288">
    <property type="term" value="P:isopentenyl diphosphate biosynthetic process, methylerythritol 4-phosphate pathway"/>
    <property type="evidence" value="ECO:0007669"/>
    <property type="project" value="UniProtKB-UniRule"/>
</dbReference>
<dbReference type="GO" id="GO:0016114">
    <property type="term" value="P:terpenoid biosynthetic process"/>
    <property type="evidence" value="ECO:0007669"/>
    <property type="project" value="InterPro"/>
</dbReference>
<dbReference type="Gene3D" id="3.30.230.10">
    <property type="match status" value="1"/>
</dbReference>
<dbReference type="Gene3D" id="3.30.70.890">
    <property type="entry name" value="GHMP kinase, C-terminal domain"/>
    <property type="match status" value="1"/>
</dbReference>
<dbReference type="HAMAP" id="MF_00061">
    <property type="entry name" value="IspE"/>
    <property type="match status" value="1"/>
</dbReference>
<dbReference type="InterPro" id="IPR013750">
    <property type="entry name" value="GHMP_kinase_C_dom"/>
</dbReference>
<dbReference type="InterPro" id="IPR036554">
    <property type="entry name" value="GHMP_kinase_C_sf"/>
</dbReference>
<dbReference type="InterPro" id="IPR006204">
    <property type="entry name" value="GHMP_kinase_N_dom"/>
</dbReference>
<dbReference type="InterPro" id="IPR004424">
    <property type="entry name" value="IspE"/>
</dbReference>
<dbReference type="InterPro" id="IPR020568">
    <property type="entry name" value="Ribosomal_Su5_D2-typ_SF"/>
</dbReference>
<dbReference type="InterPro" id="IPR014721">
    <property type="entry name" value="Ribsml_uS5_D2-typ_fold_subgr"/>
</dbReference>
<dbReference type="NCBIfam" id="TIGR00154">
    <property type="entry name" value="ispE"/>
    <property type="match status" value="1"/>
</dbReference>
<dbReference type="NCBIfam" id="NF011202">
    <property type="entry name" value="PRK14608.1"/>
    <property type="match status" value="1"/>
</dbReference>
<dbReference type="PANTHER" id="PTHR43527">
    <property type="entry name" value="4-DIPHOSPHOCYTIDYL-2-C-METHYL-D-ERYTHRITOL KINASE, CHLOROPLASTIC"/>
    <property type="match status" value="1"/>
</dbReference>
<dbReference type="PANTHER" id="PTHR43527:SF2">
    <property type="entry name" value="4-DIPHOSPHOCYTIDYL-2-C-METHYL-D-ERYTHRITOL KINASE, CHLOROPLASTIC"/>
    <property type="match status" value="1"/>
</dbReference>
<dbReference type="Pfam" id="PF08544">
    <property type="entry name" value="GHMP_kinases_C"/>
    <property type="match status" value="1"/>
</dbReference>
<dbReference type="Pfam" id="PF00288">
    <property type="entry name" value="GHMP_kinases_N"/>
    <property type="match status" value="1"/>
</dbReference>
<dbReference type="PIRSF" id="PIRSF010376">
    <property type="entry name" value="IspE"/>
    <property type="match status" value="1"/>
</dbReference>
<dbReference type="SUPFAM" id="SSF55060">
    <property type="entry name" value="GHMP Kinase, C-terminal domain"/>
    <property type="match status" value="1"/>
</dbReference>
<dbReference type="SUPFAM" id="SSF54211">
    <property type="entry name" value="Ribosomal protein S5 domain 2-like"/>
    <property type="match status" value="1"/>
</dbReference>